<proteinExistence type="inferred from homology"/>
<name>PTH_BARQU</name>
<organism>
    <name type="scientific">Bartonella quintana (strain Toulouse)</name>
    <name type="common">Rochalimaea quintana</name>
    <dbReference type="NCBI Taxonomy" id="283165"/>
    <lineage>
        <taxon>Bacteria</taxon>
        <taxon>Pseudomonadati</taxon>
        <taxon>Pseudomonadota</taxon>
        <taxon>Alphaproteobacteria</taxon>
        <taxon>Hyphomicrobiales</taxon>
        <taxon>Bartonellaceae</taxon>
        <taxon>Bartonella</taxon>
    </lineage>
</organism>
<keyword id="KW-0963">Cytoplasm</keyword>
<keyword id="KW-0378">Hydrolase</keyword>
<keyword id="KW-0694">RNA-binding</keyword>
<keyword id="KW-0820">tRNA-binding</keyword>
<evidence type="ECO:0000255" key="1">
    <source>
        <dbReference type="HAMAP-Rule" id="MF_00083"/>
    </source>
</evidence>
<protein>
    <recommendedName>
        <fullName evidence="1">Peptidyl-tRNA hydrolase</fullName>
        <shortName evidence="1">Pth</shortName>
        <ecNumber evidence="1">3.1.1.29</ecNumber>
    </recommendedName>
</protein>
<sequence length="193" mass="21474">MWLIAGLGNPGLQYQNNRHNIGFMVIDAIYQSFSFSPWSKKFQAEISNGLIDGEKTFLIKPQTFMNLSGQAIGEVLRFYKLDLKNFIVICDELDLPPGKVRVKTAGGNNGHNGIKSIDAHCGTDYCRVRLGIGHPGSKELVHQHVLGNFTKSDQEWLSPLLDAIAKNIALLIKGDRCLFMDTISQATKNKNLQ</sequence>
<gene>
    <name evidence="1" type="primary">pth</name>
    <name type="ordered locus">BQ03280</name>
</gene>
<accession>Q6G0F9</accession>
<feature type="chain" id="PRO_0000187695" description="Peptidyl-tRNA hydrolase">
    <location>
        <begin position="1"/>
        <end position="193"/>
    </location>
</feature>
<feature type="active site" description="Proton acceptor" evidence="1">
    <location>
        <position position="19"/>
    </location>
</feature>
<feature type="binding site" evidence="1">
    <location>
        <position position="14"/>
    </location>
    <ligand>
        <name>tRNA</name>
        <dbReference type="ChEBI" id="CHEBI:17843"/>
    </ligand>
</feature>
<feature type="binding site" evidence="1">
    <location>
        <position position="64"/>
    </location>
    <ligand>
        <name>tRNA</name>
        <dbReference type="ChEBI" id="CHEBI:17843"/>
    </ligand>
</feature>
<feature type="binding site" evidence="1">
    <location>
        <position position="66"/>
    </location>
    <ligand>
        <name>tRNA</name>
        <dbReference type="ChEBI" id="CHEBI:17843"/>
    </ligand>
</feature>
<feature type="binding site" evidence="1">
    <location>
        <position position="112"/>
    </location>
    <ligand>
        <name>tRNA</name>
        <dbReference type="ChEBI" id="CHEBI:17843"/>
    </ligand>
</feature>
<feature type="site" description="Discriminates between blocked and unblocked aminoacyl-tRNA" evidence="1">
    <location>
        <position position="9"/>
    </location>
</feature>
<feature type="site" description="Stabilizes the basic form of H active site to accept a proton" evidence="1">
    <location>
        <position position="91"/>
    </location>
</feature>
<comment type="function">
    <text evidence="1">Hydrolyzes ribosome-free peptidyl-tRNAs (with 1 or more amino acids incorporated), which drop off the ribosome during protein synthesis, or as a result of ribosome stalling.</text>
</comment>
<comment type="function">
    <text evidence="1">Catalyzes the release of premature peptidyl moieties from peptidyl-tRNA molecules trapped in stalled 50S ribosomal subunits, and thus maintains levels of free tRNAs and 50S ribosomes.</text>
</comment>
<comment type="catalytic activity">
    <reaction evidence="1">
        <text>an N-acyl-L-alpha-aminoacyl-tRNA + H2O = an N-acyl-L-amino acid + a tRNA + H(+)</text>
        <dbReference type="Rhea" id="RHEA:54448"/>
        <dbReference type="Rhea" id="RHEA-COMP:10123"/>
        <dbReference type="Rhea" id="RHEA-COMP:13883"/>
        <dbReference type="ChEBI" id="CHEBI:15377"/>
        <dbReference type="ChEBI" id="CHEBI:15378"/>
        <dbReference type="ChEBI" id="CHEBI:59874"/>
        <dbReference type="ChEBI" id="CHEBI:78442"/>
        <dbReference type="ChEBI" id="CHEBI:138191"/>
        <dbReference type="EC" id="3.1.1.29"/>
    </reaction>
</comment>
<comment type="subunit">
    <text evidence="1">Monomer.</text>
</comment>
<comment type="subcellular location">
    <subcellularLocation>
        <location evidence="1">Cytoplasm</location>
    </subcellularLocation>
</comment>
<comment type="similarity">
    <text evidence="1">Belongs to the PTH family.</text>
</comment>
<dbReference type="EC" id="3.1.1.29" evidence="1"/>
<dbReference type="EMBL" id="BX897700">
    <property type="protein sequence ID" value="CAF25828.1"/>
    <property type="molecule type" value="Genomic_DNA"/>
</dbReference>
<dbReference type="RefSeq" id="WP_011179123.1">
    <property type="nucleotide sequence ID" value="NC_005955.1"/>
</dbReference>
<dbReference type="SMR" id="Q6G0F9"/>
<dbReference type="KEGG" id="bqu:BQ03280"/>
<dbReference type="eggNOG" id="COG0193">
    <property type="taxonomic scope" value="Bacteria"/>
</dbReference>
<dbReference type="HOGENOM" id="CLU_062456_1_0_5"/>
<dbReference type="OrthoDB" id="9800507at2"/>
<dbReference type="Proteomes" id="UP000000597">
    <property type="component" value="Chromosome"/>
</dbReference>
<dbReference type="GO" id="GO:0005737">
    <property type="term" value="C:cytoplasm"/>
    <property type="evidence" value="ECO:0007669"/>
    <property type="project" value="UniProtKB-SubCell"/>
</dbReference>
<dbReference type="GO" id="GO:0004045">
    <property type="term" value="F:peptidyl-tRNA hydrolase activity"/>
    <property type="evidence" value="ECO:0007669"/>
    <property type="project" value="UniProtKB-UniRule"/>
</dbReference>
<dbReference type="GO" id="GO:0000049">
    <property type="term" value="F:tRNA binding"/>
    <property type="evidence" value="ECO:0007669"/>
    <property type="project" value="UniProtKB-UniRule"/>
</dbReference>
<dbReference type="GO" id="GO:0006515">
    <property type="term" value="P:protein quality control for misfolded or incompletely synthesized proteins"/>
    <property type="evidence" value="ECO:0007669"/>
    <property type="project" value="UniProtKB-UniRule"/>
</dbReference>
<dbReference type="GO" id="GO:0072344">
    <property type="term" value="P:rescue of stalled ribosome"/>
    <property type="evidence" value="ECO:0007669"/>
    <property type="project" value="UniProtKB-UniRule"/>
</dbReference>
<dbReference type="CDD" id="cd00462">
    <property type="entry name" value="PTH"/>
    <property type="match status" value="1"/>
</dbReference>
<dbReference type="FunFam" id="3.40.50.1470:FF:000001">
    <property type="entry name" value="Peptidyl-tRNA hydrolase"/>
    <property type="match status" value="1"/>
</dbReference>
<dbReference type="Gene3D" id="3.40.50.1470">
    <property type="entry name" value="Peptidyl-tRNA hydrolase"/>
    <property type="match status" value="1"/>
</dbReference>
<dbReference type="HAMAP" id="MF_00083">
    <property type="entry name" value="Pept_tRNA_hydro_bact"/>
    <property type="match status" value="1"/>
</dbReference>
<dbReference type="InterPro" id="IPR001328">
    <property type="entry name" value="Pept_tRNA_hydro"/>
</dbReference>
<dbReference type="InterPro" id="IPR018171">
    <property type="entry name" value="Pept_tRNA_hydro_CS"/>
</dbReference>
<dbReference type="InterPro" id="IPR036416">
    <property type="entry name" value="Pept_tRNA_hydro_sf"/>
</dbReference>
<dbReference type="NCBIfam" id="TIGR00447">
    <property type="entry name" value="pth"/>
    <property type="match status" value="1"/>
</dbReference>
<dbReference type="PANTHER" id="PTHR17224">
    <property type="entry name" value="PEPTIDYL-TRNA HYDROLASE"/>
    <property type="match status" value="1"/>
</dbReference>
<dbReference type="PANTHER" id="PTHR17224:SF1">
    <property type="entry name" value="PEPTIDYL-TRNA HYDROLASE"/>
    <property type="match status" value="1"/>
</dbReference>
<dbReference type="Pfam" id="PF01195">
    <property type="entry name" value="Pept_tRNA_hydro"/>
    <property type="match status" value="1"/>
</dbReference>
<dbReference type="SUPFAM" id="SSF53178">
    <property type="entry name" value="Peptidyl-tRNA hydrolase-like"/>
    <property type="match status" value="1"/>
</dbReference>
<dbReference type="PROSITE" id="PS01195">
    <property type="entry name" value="PEPT_TRNA_HYDROL_1"/>
    <property type="match status" value="1"/>
</dbReference>
<dbReference type="PROSITE" id="PS01196">
    <property type="entry name" value="PEPT_TRNA_HYDROL_2"/>
    <property type="match status" value="1"/>
</dbReference>
<reference key="1">
    <citation type="journal article" date="2004" name="Proc. Natl. Acad. Sci. U.S.A.">
        <title>The louse-borne human pathogen Bartonella quintana is a genomic derivative of the zoonotic agent Bartonella henselae.</title>
        <authorList>
            <person name="Alsmark U.C.M."/>
            <person name="Frank A.C."/>
            <person name="Karlberg E.O."/>
            <person name="Legault B.-A."/>
            <person name="Ardell D.H."/>
            <person name="Canbaeck B."/>
            <person name="Eriksson A.-S."/>
            <person name="Naeslund A.K."/>
            <person name="Handley S.A."/>
            <person name="Huvet M."/>
            <person name="La Scola B."/>
            <person name="Holmberg M."/>
            <person name="Andersson S.G.E."/>
        </authorList>
    </citation>
    <scope>NUCLEOTIDE SEQUENCE [LARGE SCALE GENOMIC DNA]</scope>
    <source>
        <strain>Toulouse</strain>
    </source>
</reference>